<accession>Q88VJ4</accession>
<accession>F9UQ10</accession>
<gene>
    <name evidence="1" type="primary">rpsB</name>
    <name type="ordered locus">lp_2055</name>
</gene>
<protein>
    <recommendedName>
        <fullName evidence="1">Small ribosomal subunit protein uS2</fullName>
    </recommendedName>
    <alternativeName>
        <fullName evidence="3">30S ribosomal protein S2</fullName>
    </alternativeName>
</protein>
<dbReference type="EMBL" id="AL935263">
    <property type="protein sequence ID" value="CCC79299.1"/>
    <property type="molecule type" value="Genomic_DNA"/>
</dbReference>
<dbReference type="RefSeq" id="WP_003640739.1">
    <property type="nucleotide sequence ID" value="NC_004567.2"/>
</dbReference>
<dbReference type="RefSeq" id="YP_004889813.1">
    <property type="nucleotide sequence ID" value="NC_004567.2"/>
</dbReference>
<dbReference type="SMR" id="Q88VJ4"/>
<dbReference type="STRING" id="220668.lp_2055"/>
<dbReference type="EnsemblBacteria" id="CCC79299">
    <property type="protein sequence ID" value="CCC79299"/>
    <property type="gene ID" value="lp_2055"/>
</dbReference>
<dbReference type="GeneID" id="89669336"/>
<dbReference type="KEGG" id="lpl:lp_2055"/>
<dbReference type="PATRIC" id="fig|220668.9.peg.1740"/>
<dbReference type="eggNOG" id="COG0052">
    <property type="taxonomic scope" value="Bacteria"/>
</dbReference>
<dbReference type="HOGENOM" id="CLU_040318_1_2_9"/>
<dbReference type="OrthoDB" id="9808036at2"/>
<dbReference type="PhylomeDB" id="Q88VJ4"/>
<dbReference type="Proteomes" id="UP000000432">
    <property type="component" value="Chromosome"/>
</dbReference>
<dbReference type="GO" id="GO:0022627">
    <property type="term" value="C:cytosolic small ribosomal subunit"/>
    <property type="evidence" value="ECO:0007669"/>
    <property type="project" value="TreeGrafter"/>
</dbReference>
<dbReference type="GO" id="GO:0003735">
    <property type="term" value="F:structural constituent of ribosome"/>
    <property type="evidence" value="ECO:0007669"/>
    <property type="project" value="InterPro"/>
</dbReference>
<dbReference type="GO" id="GO:0006412">
    <property type="term" value="P:translation"/>
    <property type="evidence" value="ECO:0007669"/>
    <property type="project" value="UniProtKB-UniRule"/>
</dbReference>
<dbReference type="CDD" id="cd01425">
    <property type="entry name" value="RPS2"/>
    <property type="match status" value="1"/>
</dbReference>
<dbReference type="FunFam" id="1.10.287.610:FF:000001">
    <property type="entry name" value="30S ribosomal protein S2"/>
    <property type="match status" value="1"/>
</dbReference>
<dbReference type="Gene3D" id="3.40.50.10490">
    <property type="entry name" value="Glucose-6-phosphate isomerase like protein, domain 1"/>
    <property type="match status" value="1"/>
</dbReference>
<dbReference type="Gene3D" id="1.10.287.610">
    <property type="entry name" value="Helix hairpin bin"/>
    <property type="match status" value="1"/>
</dbReference>
<dbReference type="HAMAP" id="MF_00291_B">
    <property type="entry name" value="Ribosomal_uS2_B"/>
    <property type="match status" value="1"/>
</dbReference>
<dbReference type="InterPro" id="IPR001865">
    <property type="entry name" value="Ribosomal_uS2"/>
</dbReference>
<dbReference type="InterPro" id="IPR005706">
    <property type="entry name" value="Ribosomal_uS2_bac/mit/plastid"/>
</dbReference>
<dbReference type="InterPro" id="IPR018130">
    <property type="entry name" value="Ribosomal_uS2_CS"/>
</dbReference>
<dbReference type="InterPro" id="IPR023591">
    <property type="entry name" value="Ribosomal_uS2_flav_dom_sf"/>
</dbReference>
<dbReference type="NCBIfam" id="TIGR01011">
    <property type="entry name" value="rpsB_bact"/>
    <property type="match status" value="1"/>
</dbReference>
<dbReference type="PANTHER" id="PTHR12534">
    <property type="entry name" value="30S RIBOSOMAL PROTEIN S2 PROKARYOTIC AND ORGANELLAR"/>
    <property type="match status" value="1"/>
</dbReference>
<dbReference type="PANTHER" id="PTHR12534:SF0">
    <property type="entry name" value="SMALL RIBOSOMAL SUBUNIT PROTEIN US2M"/>
    <property type="match status" value="1"/>
</dbReference>
<dbReference type="Pfam" id="PF00318">
    <property type="entry name" value="Ribosomal_S2"/>
    <property type="match status" value="1"/>
</dbReference>
<dbReference type="PRINTS" id="PR00395">
    <property type="entry name" value="RIBOSOMALS2"/>
</dbReference>
<dbReference type="SUPFAM" id="SSF52313">
    <property type="entry name" value="Ribosomal protein S2"/>
    <property type="match status" value="1"/>
</dbReference>
<dbReference type="PROSITE" id="PS00962">
    <property type="entry name" value="RIBOSOMAL_S2_1"/>
    <property type="match status" value="1"/>
</dbReference>
<dbReference type="PROSITE" id="PS00963">
    <property type="entry name" value="RIBOSOMAL_S2_2"/>
    <property type="match status" value="1"/>
</dbReference>
<keyword id="KW-1185">Reference proteome</keyword>
<keyword id="KW-0687">Ribonucleoprotein</keyword>
<keyword id="KW-0689">Ribosomal protein</keyword>
<comment type="similarity">
    <text evidence="1">Belongs to the universal ribosomal protein uS2 family.</text>
</comment>
<proteinExistence type="inferred from homology"/>
<name>RS2_LACPL</name>
<evidence type="ECO:0000255" key="1">
    <source>
        <dbReference type="HAMAP-Rule" id="MF_00291"/>
    </source>
</evidence>
<evidence type="ECO:0000256" key="2">
    <source>
        <dbReference type="SAM" id="MobiDB-lite"/>
    </source>
</evidence>
<evidence type="ECO:0000305" key="3"/>
<organism>
    <name type="scientific">Lactiplantibacillus plantarum (strain ATCC BAA-793 / NCIMB 8826 / WCFS1)</name>
    <name type="common">Lactobacillus plantarum</name>
    <dbReference type="NCBI Taxonomy" id="220668"/>
    <lineage>
        <taxon>Bacteria</taxon>
        <taxon>Bacillati</taxon>
        <taxon>Bacillota</taxon>
        <taxon>Bacilli</taxon>
        <taxon>Lactobacillales</taxon>
        <taxon>Lactobacillaceae</taxon>
        <taxon>Lactiplantibacillus</taxon>
    </lineage>
</organism>
<sequence length="267" mass="30225">MAVISMKQLLEAGVHFGHQTRRWNPKMKPYIFTERNGIYIIDLQKTVKMIDSAYNFVKDAAADDGVILFVGTKKQAQDSIEEEATRAGQYYVNHRWLGGTLTNWNTIQTRIKRLKDLKKMEADGTFERLPKKEVSLLMKQRAKLEKFLGGIEDMPRIPDVIFIVDPRKEQIAVKEAQKLNIPIVAMVDTNTDPDDIDVIIPSNDDAIRAVRLITSKMADAVIEGRQGEDEDVTEDSFKDNKDAKKSVDSLEDIVEAVEGDNDAKSDK</sequence>
<reference key="1">
    <citation type="journal article" date="2003" name="Proc. Natl. Acad. Sci. U.S.A.">
        <title>Complete genome sequence of Lactobacillus plantarum WCFS1.</title>
        <authorList>
            <person name="Kleerebezem M."/>
            <person name="Boekhorst J."/>
            <person name="van Kranenburg R."/>
            <person name="Molenaar D."/>
            <person name="Kuipers O.P."/>
            <person name="Leer R."/>
            <person name="Tarchini R."/>
            <person name="Peters S.A."/>
            <person name="Sandbrink H.M."/>
            <person name="Fiers M.W.E.J."/>
            <person name="Stiekema W."/>
            <person name="Klein Lankhorst R.M."/>
            <person name="Bron P.A."/>
            <person name="Hoffer S.M."/>
            <person name="Nierop Groot M.N."/>
            <person name="Kerkhoven R."/>
            <person name="De Vries M."/>
            <person name="Ursing B."/>
            <person name="De Vos W.M."/>
            <person name="Siezen R.J."/>
        </authorList>
    </citation>
    <scope>NUCLEOTIDE SEQUENCE [LARGE SCALE GENOMIC DNA]</scope>
    <source>
        <strain>ATCC BAA-793 / NCIMB 8826 / WCFS1</strain>
    </source>
</reference>
<reference key="2">
    <citation type="journal article" date="2012" name="J. Bacteriol.">
        <title>Complete resequencing and reannotation of the Lactobacillus plantarum WCFS1 genome.</title>
        <authorList>
            <person name="Siezen R.J."/>
            <person name="Francke C."/>
            <person name="Renckens B."/>
            <person name="Boekhorst J."/>
            <person name="Wels M."/>
            <person name="Kleerebezem M."/>
            <person name="van Hijum S.A."/>
        </authorList>
    </citation>
    <scope>NUCLEOTIDE SEQUENCE [LARGE SCALE GENOMIC DNA]</scope>
    <scope>GENOME REANNOTATION</scope>
    <source>
        <strain>ATCC BAA-793 / NCIMB 8826 / WCFS1</strain>
    </source>
</reference>
<feature type="chain" id="PRO_0000134183" description="Small ribosomal subunit protein uS2">
    <location>
        <begin position="1"/>
        <end position="267"/>
    </location>
</feature>
<feature type="region of interest" description="Disordered" evidence="2">
    <location>
        <begin position="224"/>
        <end position="244"/>
    </location>
</feature>
<feature type="compositionally biased region" description="Basic and acidic residues" evidence="2">
    <location>
        <begin position="235"/>
        <end position="244"/>
    </location>
</feature>